<comment type="function">
    <text evidence="2 3">Essential for life in oxygen, but nonessential under anaerobic conditions. Required for biogenesis of the large ribosomal subunit and initiation of translation in oxygen (PubMed:23318452). The complex LTO1:YAE1 functions as a target specific adapter that recruits apo-RLI1 to the cytosolic iron-sulfur protein assembly (CIA) complex machinery (PubMed:26182403).</text>
</comment>
<comment type="subunit">
    <text evidence="2 3">Forms a complex with YAE1; the complex bridges the interaction between the CIA complex and RLI1 (PubMed:23318452). Associates with the CIA complex (via its C-terminal tryptophan) (PubMed:26182403).</text>
</comment>
<comment type="interaction">
    <interactant intactId="EBI-28226">
        <id>P53846</id>
    </interactant>
    <interactant intactId="EBI-25522">
        <id>P47118</id>
        <label>YAE1</label>
    </interactant>
    <organismsDiffer>false</organismsDiffer>
    <experiments>5</experiments>
</comment>
<comment type="subcellular location">
    <subcellularLocation>
        <location evidence="2">Nucleus</location>
    </subcellularLocation>
</comment>
<comment type="miscellaneous">
    <text evidence="1">Present with 784 molecules/cell in log phase SD medium.</text>
</comment>
<comment type="similarity">
    <text evidence="5">Belongs to the LTO1 family.</text>
</comment>
<comment type="sequence caution" evidence="5">
    <conflict type="erroneous initiation">
        <sequence resource="EMBL-CDS" id="CAA65484"/>
    </conflict>
    <text>Extended N-terminus.</text>
</comment>
<comment type="sequence caution" evidence="5">
    <conflict type="erroneous initiation">
        <sequence resource="EMBL-CDS" id="CAA96167"/>
    </conflict>
    <text>Extended N-terminus.</text>
</comment>
<protein>
    <recommendedName>
        <fullName evidence="4 5">Protein LTO1</fullName>
    </recommendedName>
    <alternativeName>
        <fullName evidence="5">LTO1 family protein YNL260C</fullName>
    </alternativeName>
</protein>
<sequence>MDFDNLLNLEEQYYQEGFLEGQNENIKQSFLEGKQYGLQVGFQRFTLLGQMEGLCDVIESYGLHSPTLEKNIHTIRTLMKGLKMNNDDESVMEFERVLIKLKNKFRTILITLHRLVKDKRTPTVTFEVFEDVSRAIAGEIRGFVENEDIAKNKTKQNQAQSW</sequence>
<gene>
    <name evidence="4" type="primary">LTO1</name>
    <name type="ordered locus">YNL260C</name>
    <name type="ORF">N0838</name>
</gene>
<organism>
    <name type="scientific">Saccharomyces cerevisiae (strain ATCC 204508 / S288c)</name>
    <name type="common">Baker's yeast</name>
    <dbReference type="NCBI Taxonomy" id="559292"/>
    <lineage>
        <taxon>Eukaryota</taxon>
        <taxon>Fungi</taxon>
        <taxon>Dikarya</taxon>
        <taxon>Ascomycota</taxon>
        <taxon>Saccharomycotina</taxon>
        <taxon>Saccharomycetes</taxon>
        <taxon>Saccharomycetales</taxon>
        <taxon>Saccharomycetaceae</taxon>
        <taxon>Saccharomyces</taxon>
    </lineage>
</organism>
<name>LTO1_YEAST</name>
<dbReference type="EMBL" id="X96722">
    <property type="protein sequence ID" value="CAA65484.1"/>
    <property type="status" value="ALT_INIT"/>
    <property type="molecule type" value="Genomic_DNA"/>
</dbReference>
<dbReference type="EMBL" id="Z71536">
    <property type="protein sequence ID" value="CAA96167.1"/>
    <property type="status" value="ALT_INIT"/>
    <property type="molecule type" value="Genomic_DNA"/>
</dbReference>
<dbReference type="EMBL" id="BK006947">
    <property type="protein sequence ID" value="DAA10299.2"/>
    <property type="molecule type" value="Genomic_DNA"/>
</dbReference>
<dbReference type="PIR" id="S63233">
    <property type="entry name" value="S63233"/>
</dbReference>
<dbReference type="RefSeq" id="NP_014139.2">
    <property type="nucleotide sequence ID" value="NM_001183098.2"/>
</dbReference>
<dbReference type="SMR" id="P53846"/>
<dbReference type="BioGRID" id="35579">
    <property type="interactions" value="130"/>
</dbReference>
<dbReference type="DIP" id="DIP-4273N"/>
<dbReference type="FunCoup" id="P53846">
    <property type="interactions" value="43"/>
</dbReference>
<dbReference type="IntAct" id="P53846">
    <property type="interactions" value="9"/>
</dbReference>
<dbReference type="MINT" id="P53846"/>
<dbReference type="STRING" id="4932.YNL260C"/>
<dbReference type="iPTMnet" id="P53846"/>
<dbReference type="PaxDb" id="4932-YNL260C"/>
<dbReference type="PeptideAtlas" id="P53846"/>
<dbReference type="GeneID" id="855461"/>
<dbReference type="KEGG" id="sce:YNL260C"/>
<dbReference type="AGR" id="SGD:S000005204"/>
<dbReference type="SGD" id="S000005204">
    <property type="gene designation" value="LTO1"/>
</dbReference>
<dbReference type="eggNOG" id="KOG4595">
    <property type="taxonomic scope" value="Eukaryota"/>
</dbReference>
<dbReference type="HOGENOM" id="CLU_136375_0_0_1"/>
<dbReference type="InParanoid" id="P53846"/>
<dbReference type="OrthoDB" id="48036at2759"/>
<dbReference type="BioCyc" id="YEAST:G3O-33256-MONOMER"/>
<dbReference type="BioGRID-ORCS" id="855461">
    <property type="hits" value="1 hit in 10 CRISPR screens"/>
</dbReference>
<dbReference type="ChiTaRS" id="LTO1">
    <property type="organism name" value="yeast"/>
</dbReference>
<dbReference type="PRO" id="PR:P53846"/>
<dbReference type="Proteomes" id="UP000002311">
    <property type="component" value="Chromosome XIV"/>
</dbReference>
<dbReference type="RNAct" id="P53846">
    <property type="molecule type" value="protein"/>
</dbReference>
<dbReference type="GO" id="GO:0005737">
    <property type="term" value="C:cytoplasm"/>
    <property type="evidence" value="ECO:0007005"/>
    <property type="project" value="SGD"/>
</dbReference>
<dbReference type="GO" id="GO:0005634">
    <property type="term" value="C:nucleus"/>
    <property type="evidence" value="ECO:0000314"/>
    <property type="project" value="SGD"/>
</dbReference>
<dbReference type="GO" id="GO:0062092">
    <property type="term" value="C:Yae1-Lto1 complex"/>
    <property type="evidence" value="ECO:0000314"/>
    <property type="project" value="SGD"/>
</dbReference>
<dbReference type="GO" id="GO:0051604">
    <property type="term" value="P:protein maturation"/>
    <property type="evidence" value="ECO:0000314"/>
    <property type="project" value="UniProtKB"/>
</dbReference>
<dbReference type="InterPro" id="IPR019191">
    <property type="entry name" value="Essential_protein_Yae1_N"/>
</dbReference>
<dbReference type="InterPro" id="IPR052436">
    <property type="entry name" value="LTO1_adapter"/>
</dbReference>
<dbReference type="PANTHER" id="PTHR28532">
    <property type="entry name" value="GEO13458P1"/>
    <property type="match status" value="1"/>
</dbReference>
<dbReference type="PANTHER" id="PTHR28532:SF1">
    <property type="entry name" value="ORAL CANCER OVEREXPRESSED 1"/>
    <property type="match status" value="1"/>
</dbReference>
<dbReference type="Pfam" id="PF09811">
    <property type="entry name" value="Yae1_N"/>
    <property type="match status" value="1"/>
</dbReference>
<evidence type="ECO:0000269" key="1">
    <source>
    </source>
</evidence>
<evidence type="ECO:0000269" key="2">
    <source>
    </source>
</evidence>
<evidence type="ECO:0000269" key="3">
    <source>
    </source>
</evidence>
<evidence type="ECO:0000303" key="4">
    <source>
    </source>
</evidence>
<evidence type="ECO:0000305" key="5"/>
<reference key="1">
    <citation type="journal article" date="1997" name="Yeast">
        <title>Sequence analysis of the 33 kb long region between ORC5 and SUI1 from the left arm of chromosome XIV from Saccharomyces cerevisiae.</title>
        <authorList>
            <person name="Sen-Gupta M."/>
            <person name="Gueldener U."/>
            <person name="Beinhauer J.D."/>
            <person name="Fiedler T.A."/>
            <person name="Hegemann J.H."/>
        </authorList>
    </citation>
    <scope>NUCLEOTIDE SEQUENCE [GENOMIC DNA]</scope>
    <source>
        <strain>ATCC 96604 / S288c / FY1679</strain>
    </source>
</reference>
<reference key="2">
    <citation type="journal article" date="1997" name="Nature">
        <title>The nucleotide sequence of Saccharomyces cerevisiae chromosome XIV and its evolutionary implications.</title>
        <authorList>
            <person name="Philippsen P."/>
            <person name="Kleine K."/>
            <person name="Poehlmann R."/>
            <person name="Duesterhoeft A."/>
            <person name="Hamberg K."/>
            <person name="Hegemann J.H."/>
            <person name="Obermaier B."/>
            <person name="Urrestarazu L.A."/>
            <person name="Aert R."/>
            <person name="Albermann K."/>
            <person name="Altmann R."/>
            <person name="Andre B."/>
            <person name="Baladron V."/>
            <person name="Ballesta J.P.G."/>
            <person name="Becam A.-M."/>
            <person name="Beinhauer J.D."/>
            <person name="Boskovic J."/>
            <person name="Buitrago M.J."/>
            <person name="Bussereau F."/>
            <person name="Coster F."/>
            <person name="Crouzet M."/>
            <person name="D'Angelo M."/>
            <person name="Dal Pero F."/>
            <person name="De Antoni A."/>
            <person name="del Rey F."/>
            <person name="Doignon F."/>
            <person name="Domdey H."/>
            <person name="Dubois E."/>
            <person name="Fiedler T.A."/>
            <person name="Fleig U."/>
            <person name="Floeth M."/>
            <person name="Fritz C."/>
            <person name="Gaillardin C."/>
            <person name="Garcia-Cantalejo J.M."/>
            <person name="Glansdorff N."/>
            <person name="Goffeau A."/>
            <person name="Gueldener U."/>
            <person name="Herbert C.J."/>
            <person name="Heumann K."/>
            <person name="Heuss-Neitzel D."/>
            <person name="Hilbert H."/>
            <person name="Hinni K."/>
            <person name="Iraqui Houssaini I."/>
            <person name="Jacquet M."/>
            <person name="Jimenez A."/>
            <person name="Jonniaux J.-L."/>
            <person name="Karpfinger-Hartl L."/>
            <person name="Lanfranchi G."/>
            <person name="Lepingle A."/>
            <person name="Levesque H."/>
            <person name="Lyck R."/>
            <person name="Maftahi M."/>
            <person name="Mallet L."/>
            <person name="Maurer C.T.C."/>
            <person name="Messenguy F."/>
            <person name="Mewes H.-W."/>
            <person name="Moestl D."/>
            <person name="Nasr F."/>
            <person name="Nicaud J.-M."/>
            <person name="Niedenthal R.K."/>
            <person name="Pandolfo D."/>
            <person name="Pierard A."/>
            <person name="Piravandi E."/>
            <person name="Planta R.J."/>
            <person name="Pohl T.M."/>
            <person name="Purnelle B."/>
            <person name="Rebischung C."/>
            <person name="Remacha M.A."/>
            <person name="Revuelta J.L."/>
            <person name="Rinke M."/>
            <person name="Saiz J.E."/>
            <person name="Sartorello F."/>
            <person name="Scherens B."/>
            <person name="Sen-Gupta M."/>
            <person name="Soler-Mira A."/>
            <person name="Urbanus J.H.M."/>
            <person name="Valle G."/>
            <person name="Van Dyck L."/>
            <person name="Verhasselt P."/>
            <person name="Vierendeels F."/>
            <person name="Vissers S."/>
            <person name="Voet M."/>
            <person name="Volckaert G."/>
            <person name="Wach A."/>
            <person name="Wambutt R."/>
            <person name="Wedler H."/>
            <person name="Zollner A."/>
            <person name="Hani J."/>
        </authorList>
    </citation>
    <scope>NUCLEOTIDE SEQUENCE [LARGE SCALE GENOMIC DNA]</scope>
    <source>
        <strain>ATCC 204508 / S288c</strain>
    </source>
</reference>
<reference key="3">
    <citation type="journal article" date="2014" name="G3 (Bethesda)">
        <title>The reference genome sequence of Saccharomyces cerevisiae: Then and now.</title>
        <authorList>
            <person name="Engel S.R."/>
            <person name="Dietrich F.S."/>
            <person name="Fisk D.G."/>
            <person name="Binkley G."/>
            <person name="Balakrishnan R."/>
            <person name="Costanzo M.C."/>
            <person name="Dwight S.S."/>
            <person name="Hitz B.C."/>
            <person name="Karra K."/>
            <person name="Nash R.S."/>
            <person name="Weng S."/>
            <person name="Wong E.D."/>
            <person name="Lloyd P."/>
            <person name="Skrzypek M.S."/>
            <person name="Miyasato S.R."/>
            <person name="Simison M."/>
            <person name="Cherry J.M."/>
        </authorList>
    </citation>
    <scope>GENOME REANNOTATION</scope>
    <source>
        <strain>ATCC 204508 / S288c</strain>
    </source>
</reference>
<reference key="4">
    <citation type="journal article" date="2003" name="Mol. Cell">
        <title>Assigning function to yeast proteins by integration of technologies.</title>
        <authorList>
            <person name="Hazbun T.R."/>
            <person name="Malmstroem L."/>
            <person name="Anderson S."/>
            <person name="Graczyk B.J."/>
            <person name="Fox B."/>
            <person name="Riffle M."/>
            <person name="Sundin B.A."/>
            <person name="Aranda J.D."/>
            <person name="McDonald W.H."/>
            <person name="Chiu C.-H."/>
            <person name="Snydsman B.E."/>
            <person name="Bradley P."/>
            <person name="Muller E.G.D."/>
            <person name="Fields S."/>
            <person name="Baker D."/>
            <person name="Yates J.R. III"/>
            <person name="Davis T.N."/>
        </authorList>
    </citation>
    <scope>IDENTIFICATION BY MASS SPECTROMETRY</scope>
</reference>
<reference key="5">
    <citation type="journal article" date="2003" name="Nature">
        <title>Global analysis of protein expression in yeast.</title>
        <authorList>
            <person name="Ghaemmaghami S."/>
            <person name="Huh W.-K."/>
            <person name="Bower K."/>
            <person name="Howson R.W."/>
            <person name="Belle A."/>
            <person name="Dephoure N."/>
            <person name="O'Shea E.K."/>
            <person name="Weissman J.S."/>
        </authorList>
    </citation>
    <scope>LEVEL OF PROTEIN EXPRESSION [LARGE SCALE ANALYSIS]</scope>
</reference>
<reference key="6">
    <citation type="journal article" date="2014" name="Oncogene">
        <title>The function of ORAOV1/LTO1, a gene that is overexpressed frequently in cancer: essential roles in the function and biogenesis of the ribosome.</title>
        <authorList>
            <person name="Zhai C."/>
            <person name="Li Y."/>
            <person name="Mascarenhas C."/>
            <person name="Lin Q."/>
            <person name="Li K."/>
            <person name="Vyrides I."/>
            <person name="Grant C.M."/>
            <person name="Panaretou B."/>
        </authorList>
    </citation>
    <scope>FUNCTION</scope>
    <scope>INTERACTION WITH YAE1</scope>
    <scope>SUBCELLULAR LOCATION</scope>
    <scope>MUTAGENESIS OF GLU-11; PHE-18; LEU-19; GLN-50; VAL-57; LYS-83; PHE-94; LEU-101; ASN-103; HIS-113; ARG-134; ASN-146 AND GLU-147</scope>
</reference>
<reference key="7">
    <citation type="journal article" date="2015" name="Elife">
        <title>The deca-GX3 proteins Yae1-Lto1 function as adaptors recruiting the ABC protein Rli1 for iron-sulfur cluster insertion.</title>
        <authorList>
            <person name="Paul V.D."/>
            <person name="Muehlenhoff U."/>
            <person name="Stuempfig M."/>
            <person name="Seebacher J."/>
            <person name="Kugler K.G."/>
            <person name="Renicke C."/>
            <person name="Taxis C."/>
            <person name="Gavin A.C."/>
            <person name="Pierik A.J."/>
            <person name="Lill R."/>
        </authorList>
    </citation>
    <scope>FUNCTION</scope>
    <scope>INTERACTION WITH YAE1 AND THE CIA COMPLEX</scope>
    <scope>MUTAGENESIS OF ASP-4; 17-GLY--GLY-21; 33-GLY--GLY-41; 49-GLY--GLY-53 AND TRP-162</scope>
    <scope>IDENTIFICATION OF INITIATION SITE</scope>
</reference>
<keyword id="KW-0539">Nucleus</keyword>
<keyword id="KW-1185">Reference proteome</keyword>
<proteinExistence type="evidence at protein level"/>
<accession>P53846</accession>
<accession>D6W0T3</accession>
<feature type="chain" id="PRO_0000203382" description="Protein LTO1">
    <location>
        <begin position="1"/>
        <end position="162"/>
    </location>
</feature>
<feature type="region of interest" description="deca-GX3 motif; required for interaction with YAE1 and the CIA complex" evidence="3">
    <location>
        <begin position="17"/>
        <end position="53"/>
    </location>
</feature>
<feature type="mutagenesis site" description="No effect on interaction with YAE1 or the CIA complex. No effect on iron incorporation into RLI1." evidence="3">
    <original>D</original>
    <variation>A</variation>
    <location>
        <position position="4"/>
    </location>
</feature>
<feature type="mutagenesis site" description="Lethal at 37 degrees Celsius; when associated with P-19, E-83, L-113 and G-147. Lethal at 37 degrees Celsius; when associated with R-0, R-50, L-94, S-101 and S-146." evidence="2">
    <original>E</original>
    <variation>G</variation>
    <location>
        <position position="11"/>
    </location>
</feature>
<feature type="mutagenesis site" description="Slightly decreases interaction with YAE1 and the CIA complex. No effect on iron incorporation into RLI1." evidence="3">
    <original>GFLEG</original>
    <variation>AFLEA</variation>
    <location>
        <begin position="17"/>
        <end position="21"/>
    </location>
</feature>
<feature type="mutagenesis site" description="Lethal at 37 degrees Celsius; when associated with D-57, D-103 and G-134." evidence="2">
    <original>F</original>
    <variation>L</variation>
    <location>
        <position position="18"/>
    </location>
</feature>
<feature type="mutagenesis site" description="Lethal at 37 degrees Celsius; when associated with G-11, E-83, L-113 and G-147." evidence="2">
    <original>L</original>
    <variation>P</variation>
    <location>
        <position position="19"/>
    </location>
</feature>
<feature type="mutagenesis site" description="Decreases interaction with YAE1 and the CIA complex. Abolishes iron incorporation into RLI1." evidence="3">
    <original>GKQYGLQVG</original>
    <variation>AKQYALQVA</variation>
    <location>
        <begin position="33"/>
        <end position="41"/>
    </location>
</feature>
<feature type="mutagenesis site" description="Decreases interaction with YAE1 and the CIA complex. Strongly decreases iron incorporation into RLI1." evidence="3">
    <original>GQMEG</original>
    <variation>AQMEA</variation>
    <location>
        <begin position="49"/>
        <end position="53"/>
    </location>
</feature>
<feature type="mutagenesis site" description="Lethal at 37 degrees Celsius; when associated with G-11, L-94, S-101 and S-146." evidence="2">
    <original>Q</original>
    <variation>R</variation>
    <location>
        <position position="50"/>
    </location>
</feature>
<feature type="mutagenesis site" description="Lethal at 37 degrees Celsius; when associated with L-18, D-103 and G-134." evidence="2">
    <original>V</original>
    <variation>D</variation>
    <location>
        <position position="57"/>
    </location>
</feature>
<feature type="mutagenesis site" description="Lethal at 37 degrees Celsius; when associated with G-11, P-19, L-113 and G-147." evidence="2">
    <original>K</original>
    <variation>E</variation>
    <location>
        <position position="83"/>
    </location>
</feature>
<feature type="mutagenesis site" description="Lethal at 37 degrees Celsius; when associated with G-11, R-50, S-101 and S-146." evidence="2">
    <original>F</original>
    <variation>L</variation>
    <location>
        <position position="94"/>
    </location>
</feature>
<feature type="mutagenesis site" description="Lethal at 37 degrees Celsius; when associated with G-11, R-50, L-94 and S-146." evidence="2">
    <original>L</original>
    <variation>S</variation>
    <location>
        <position position="101"/>
    </location>
</feature>
<feature type="mutagenesis site" description="Lethal at 37 degrees Celsius; when associated with L-18, D-57 and G-134." evidence="2">
    <original>N</original>
    <variation>D</variation>
    <location>
        <position position="103"/>
    </location>
</feature>
<feature type="mutagenesis site" description="Lethal at 37 degrees Celsius; when associated with G-11, P-19, E-83 and G-147." evidence="2">
    <original>H</original>
    <variation>L</variation>
    <location>
        <position position="113"/>
    </location>
</feature>
<feature type="mutagenesis site" description="Lethal at 37 degrees Celsius; when associated with L-18, D-57 and D-103." evidence="2">
    <original>R</original>
    <variation>G</variation>
    <location>
        <position position="134"/>
    </location>
</feature>
<feature type="mutagenesis site" description="Lethal at 37 degrees Celsius; when associated with G-11, R-50,L-94 and S-101." evidence="2">
    <original>N</original>
    <variation>S</variation>
    <location>
        <position position="146"/>
    </location>
</feature>
<feature type="mutagenesis site" description="Lethal at 37 degrees Celsius; when associated with G-11, P-19, E-83 and L-113." evidence="2">
    <original>E</original>
    <variation>G</variation>
    <location>
        <position position="147"/>
    </location>
</feature>
<feature type="mutagenesis site" description="Abolishes interaction with the CIA complex. No effect on interaction with YAE1. Strongly decreases iron incorporation into RLI1." evidence="3">
    <original>W</original>
    <variation>A</variation>
    <location>
        <position position="162"/>
    </location>
</feature>